<reference key="1">
    <citation type="journal article" date="2009" name="BMC Genomics">
        <title>Pseudogene accumulation in the evolutionary histories of Salmonella enterica serovars Paratyphi A and Typhi.</title>
        <authorList>
            <person name="Holt K.E."/>
            <person name="Thomson N.R."/>
            <person name="Wain J."/>
            <person name="Langridge G.C."/>
            <person name="Hasan R."/>
            <person name="Bhutta Z.A."/>
            <person name="Quail M.A."/>
            <person name="Norbertczak H."/>
            <person name="Walker D."/>
            <person name="Simmonds M."/>
            <person name="White B."/>
            <person name="Bason N."/>
            <person name="Mungall K."/>
            <person name="Dougan G."/>
            <person name="Parkhill J."/>
        </authorList>
    </citation>
    <scope>NUCLEOTIDE SEQUENCE [LARGE SCALE GENOMIC DNA]</scope>
    <source>
        <strain>AKU_12601</strain>
    </source>
</reference>
<dbReference type="EC" id="2.3.1.16" evidence="1"/>
<dbReference type="EMBL" id="FM200053">
    <property type="protein sequence ID" value="CAR58568.1"/>
    <property type="molecule type" value="Genomic_DNA"/>
</dbReference>
<dbReference type="RefSeq" id="WP_001248137.1">
    <property type="nucleotide sequence ID" value="NC_011147.1"/>
</dbReference>
<dbReference type="SMR" id="B5BBA0"/>
<dbReference type="KEGG" id="sek:SSPA0439"/>
<dbReference type="HOGENOM" id="CLU_031026_2_0_6"/>
<dbReference type="UniPathway" id="UPA00659"/>
<dbReference type="Proteomes" id="UP000001869">
    <property type="component" value="Chromosome"/>
</dbReference>
<dbReference type="GO" id="GO:0005829">
    <property type="term" value="C:cytosol"/>
    <property type="evidence" value="ECO:0007669"/>
    <property type="project" value="TreeGrafter"/>
</dbReference>
<dbReference type="GO" id="GO:0003988">
    <property type="term" value="F:acetyl-CoA C-acyltransferase activity"/>
    <property type="evidence" value="ECO:0007669"/>
    <property type="project" value="UniProtKB-UniRule"/>
</dbReference>
<dbReference type="GO" id="GO:0006635">
    <property type="term" value="P:fatty acid beta-oxidation"/>
    <property type="evidence" value="ECO:0007669"/>
    <property type="project" value="UniProtKB-UniRule"/>
</dbReference>
<dbReference type="CDD" id="cd00751">
    <property type="entry name" value="thiolase"/>
    <property type="match status" value="1"/>
</dbReference>
<dbReference type="FunFam" id="3.40.47.10:FF:000011">
    <property type="entry name" value="3-ketoacyl-CoA thiolase"/>
    <property type="match status" value="1"/>
</dbReference>
<dbReference type="Gene3D" id="3.40.47.10">
    <property type="match status" value="1"/>
</dbReference>
<dbReference type="HAMAP" id="MF_01618">
    <property type="entry name" value="FadI"/>
    <property type="match status" value="1"/>
</dbReference>
<dbReference type="InterPro" id="IPR012806">
    <property type="entry name" value="Ac-CoA_C-AcTrfase_FadI"/>
</dbReference>
<dbReference type="InterPro" id="IPR002155">
    <property type="entry name" value="Thiolase"/>
</dbReference>
<dbReference type="InterPro" id="IPR016039">
    <property type="entry name" value="Thiolase-like"/>
</dbReference>
<dbReference type="InterPro" id="IPR020615">
    <property type="entry name" value="Thiolase_acyl_enz_int_AS"/>
</dbReference>
<dbReference type="InterPro" id="IPR020610">
    <property type="entry name" value="Thiolase_AS"/>
</dbReference>
<dbReference type="InterPro" id="IPR020617">
    <property type="entry name" value="Thiolase_C"/>
</dbReference>
<dbReference type="InterPro" id="IPR020613">
    <property type="entry name" value="Thiolase_CS"/>
</dbReference>
<dbReference type="InterPro" id="IPR020616">
    <property type="entry name" value="Thiolase_N"/>
</dbReference>
<dbReference type="NCBIfam" id="TIGR01930">
    <property type="entry name" value="AcCoA-C-Actrans"/>
    <property type="match status" value="1"/>
</dbReference>
<dbReference type="NCBIfam" id="TIGR02446">
    <property type="entry name" value="FadI"/>
    <property type="match status" value="1"/>
</dbReference>
<dbReference type="NCBIfam" id="NF006516">
    <property type="entry name" value="PRK08963.1"/>
    <property type="match status" value="1"/>
</dbReference>
<dbReference type="PANTHER" id="PTHR18919:SF107">
    <property type="entry name" value="ACETYL-COA ACETYLTRANSFERASE, CYTOSOLIC"/>
    <property type="match status" value="1"/>
</dbReference>
<dbReference type="PANTHER" id="PTHR18919">
    <property type="entry name" value="ACETYL-COA C-ACYLTRANSFERASE"/>
    <property type="match status" value="1"/>
</dbReference>
<dbReference type="Pfam" id="PF02803">
    <property type="entry name" value="Thiolase_C"/>
    <property type="match status" value="1"/>
</dbReference>
<dbReference type="Pfam" id="PF00108">
    <property type="entry name" value="Thiolase_N"/>
    <property type="match status" value="1"/>
</dbReference>
<dbReference type="PIRSF" id="PIRSF000429">
    <property type="entry name" value="Ac-CoA_Ac_transf"/>
    <property type="match status" value="1"/>
</dbReference>
<dbReference type="SUPFAM" id="SSF53901">
    <property type="entry name" value="Thiolase-like"/>
    <property type="match status" value="2"/>
</dbReference>
<dbReference type="PROSITE" id="PS00098">
    <property type="entry name" value="THIOLASE_1"/>
    <property type="match status" value="1"/>
</dbReference>
<dbReference type="PROSITE" id="PS00737">
    <property type="entry name" value="THIOLASE_2"/>
    <property type="match status" value="1"/>
</dbReference>
<dbReference type="PROSITE" id="PS00099">
    <property type="entry name" value="THIOLASE_3"/>
    <property type="match status" value="1"/>
</dbReference>
<protein>
    <recommendedName>
        <fullName evidence="1">3-ketoacyl-CoA thiolase</fullName>
        <ecNumber evidence="1">2.3.1.16</ecNumber>
    </recommendedName>
    <alternativeName>
        <fullName evidence="1">ACSs</fullName>
    </alternativeName>
    <alternativeName>
        <fullName evidence="1">Acetyl-CoA acyltransferase</fullName>
    </alternativeName>
    <alternativeName>
        <fullName evidence="1">Acyl-CoA ligase</fullName>
    </alternativeName>
    <alternativeName>
        <fullName evidence="1">Beta-ketothiolase</fullName>
    </alternativeName>
    <alternativeName>
        <fullName evidence="1">Fatty acid oxidation complex subunit beta</fullName>
    </alternativeName>
</protein>
<proteinExistence type="inferred from homology"/>
<comment type="function">
    <text evidence="1">Catalyzes the final step of fatty acid oxidation in which acetyl-CoA is released and the CoA ester of a fatty acid two carbons shorter is formed.</text>
</comment>
<comment type="catalytic activity">
    <reaction evidence="1">
        <text>an acyl-CoA + acetyl-CoA = a 3-oxoacyl-CoA + CoA</text>
        <dbReference type="Rhea" id="RHEA:21564"/>
        <dbReference type="ChEBI" id="CHEBI:57287"/>
        <dbReference type="ChEBI" id="CHEBI:57288"/>
        <dbReference type="ChEBI" id="CHEBI:58342"/>
        <dbReference type="ChEBI" id="CHEBI:90726"/>
        <dbReference type="EC" id="2.3.1.16"/>
    </reaction>
</comment>
<comment type="pathway">
    <text evidence="1">Lipid metabolism; fatty acid beta-oxidation.</text>
</comment>
<comment type="subunit">
    <text evidence="1">Heterotetramer of two alpha chains (FadJ) and two beta chains (FadI).</text>
</comment>
<comment type="subcellular location">
    <subcellularLocation>
        <location evidence="1">Cytoplasm</location>
    </subcellularLocation>
</comment>
<comment type="similarity">
    <text evidence="1">Belongs to the thiolase-like superfamily. Thiolase family.</text>
</comment>
<name>FADI_SALPK</name>
<feature type="chain" id="PRO_1000185977" description="3-ketoacyl-CoA thiolase">
    <location>
        <begin position="1"/>
        <end position="436"/>
    </location>
</feature>
<feature type="active site" description="Acyl-thioester intermediate" evidence="1">
    <location>
        <position position="99"/>
    </location>
</feature>
<feature type="active site" description="Proton acceptor" evidence="1">
    <location>
        <position position="392"/>
    </location>
</feature>
<feature type="active site" description="Proton acceptor" evidence="1">
    <location>
        <position position="422"/>
    </location>
</feature>
<gene>
    <name evidence="1" type="primary">fadI</name>
    <name type="ordered locus">SSPA0439</name>
</gene>
<organism>
    <name type="scientific">Salmonella paratyphi A (strain AKU_12601)</name>
    <dbReference type="NCBI Taxonomy" id="554290"/>
    <lineage>
        <taxon>Bacteria</taxon>
        <taxon>Pseudomonadati</taxon>
        <taxon>Pseudomonadota</taxon>
        <taxon>Gammaproteobacteria</taxon>
        <taxon>Enterobacterales</taxon>
        <taxon>Enterobacteriaceae</taxon>
        <taxon>Salmonella</taxon>
    </lineage>
</organism>
<accession>B5BBA0</accession>
<evidence type="ECO:0000255" key="1">
    <source>
        <dbReference type="HAMAP-Rule" id="MF_01618"/>
    </source>
</evidence>
<keyword id="KW-0012">Acyltransferase</keyword>
<keyword id="KW-0963">Cytoplasm</keyword>
<keyword id="KW-0276">Fatty acid metabolism</keyword>
<keyword id="KW-0442">Lipid degradation</keyword>
<keyword id="KW-0443">Lipid metabolism</keyword>
<keyword id="KW-0808">Transferase</keyword>
<sequence>MRQALPLVTRQGDRIAIVSGLRTPFARQATAFHGIPAVDLGKMVVGELLARSEIPADAIEQLVFGQVVQMPKAPNIAREIVLGTGMNVHTDAYSVSRACATSFQAVANVAESLMAGTIRAGIAGGADSSSVLPIGVSKALARVLVDVNKARTTRQRLTLFSRLRLRDLLPVPPAVAEYSTGLRMGDTAEQMAKTYGITREQQDALAHRSHQRAAQAWAEGKLAEEVMTTYVPPYKNPFAEDNNIRGASTLADYAKLRPAFDRKHGSVTAANSTPLTDGAAAVILMTESRAKELGLHPLGYLRSYAFTAIDVWQDMLLGPAWSTPLALERAGLTMADLTLFDMHEAFAAQTLANLQLLGSERFAREVLGRAQATGEVDDAKFNVLGGSIAYGHPFAATGARMITQTLHELRRRGGGFGLVTACAAGGLGAAMVLEAE</sequence>